<gene>
    <name type="primary">UL9</name>
</gene>
<name>UL09_HCMVA</name>
<sequence>MYRYTWLLWWITILLRIQQFYQWWKPDTTSCIQKTGYEGQNLSLPPSNALSSKDYTFSWYKDSLKALNMLCYYTEKLEEIDSKPDTIRRCFLNHTLFLINLTSHYSGIYYFDSLYTYGWVLRTPLCYNVTVYSIYQTHIHTTILLYPPTSTYNSLTISSFTSTNLTHTAVHYAAGNVEAQHDTATPHTMWIIPLVIVTTIIVLICFKFPQKAWNKFTQYRYNSMLTAA</sequence>
<organismHost>
    <name type="scientific">Homo sapiens</name>
    <name type="common">Human</name>
    <dbReference type="NCBI Taxonomy" id="9606"/>
</organismHost>
<protein>
    <recommendedName>
        <fullName>Uncharacterized protein UL9</fullName>
    </recommendedName>
</protein>
<reference key="1">
    <citation type="journal article" date="1990" name="Curr. Top. Microbiol. Immunol.">
        <title>Analysis of the protein-coding content of the sequence of human cytomegalovirus strain AD169.</title>
        <authorList>
            <person name="Chee M.S."/>
            <person name="Bankier A.T."/>
            <person name="Beck S."/>
            <person name="Bohni R."/>
            <person name="Brown C.M."/>
            <person name="Cerny R."/>
            <person name="Horsnell T."/>
            <person name="Hutchison C.A. III"/>
            <person name="Kouzarides T."/>
            <person name="Martignetti J.A."/>
            <person name="Preddie E."/>
            <person name="Satchwell S.C."/>
            <person name="Tomlinson P."/>
            <person name="Weston K.M."/>
            <person name="Barrell B.G."/>
        </authorList>
    </citation>
    <scope>NUCLEOTIDE SEQUENCE [LARGE SCALE GENOMIC DNA]</scope>
</reference>
<reference key="2">
    <citation type="journal article" date="2003" name="J. Gen. Virol.">
        <title>The human cytomegalovirus genome revisited: comparison with the chimpanzee cytomegalovirus genome.</title>
        <authorList>
            <person name="Davison A.J."/>
            <person name="Dolan A."/>
            <person name="Akter P."/>
            <person name="Addison C."/>
            <person name="Dargan D.J."/>
            <person name="Alcendor D.J."/>
            <person name="McGeoch D.J."/>
            <person name="Hayward G.S."/>
        </authorList>
    </citation>
    <scope>GENOME REANNOTATION</scope>
</reference>
<reference key="3">
    <citation type="journal article" date="2003" name="J. Gen. Virol.">
        <authorList>
            <person name="Davison A.J."/>
            <person name="Dolan A."/>
            <person name="Akter P."/>
            <person name="Addison C."/>
            <person name="Dargan D.J."/>
            <person name="Alcendor D.J."/>
            <person name="McGeoch D.J."/>
            <person name="Hayward G.S."/>
        </authorList>
    </citation>
    <scope>ERRATUM OF PUBMED:12533697</scope>
</reference>
<keyword id="KW-0325">Glycoprotein</keyword>
<keyword id="KW-1043">Host membrane</keyword>
<keyword id="KW-0472">Membrane</keyword>
<keyword id="KW-1185">Reference proteome</keyword>
<keyword id="KW-0732">Signal</keyword>
<keyword id="KW-0812">Transmembrane</keyword>
<keyword id="KW-1133">Transmembrane helix</keyword>
<accession>P16745</accession>
<accession>Q7M6K1</accession>
<dbReference type="EMBL" id="X17403">
    <property type="protein sequence ID" value="CAA35442.1"/>
    <property type="molecule type" value="Genomic_DNA"/>
</dbReference>
<dbReference type="EMBL" id="BK000394">
    <property type="protein sequence ID" value="DAA00187.1"/>
    <property type="molecule type" value="Genomic_DNA"/>
</dbReference>
<dbReference type="PIR" id="S09772">
    <property type="entry name" value="S09772"/>
</dbReference>
<dbReference type="GlyCosmos" id="P16745">
    <property type="glycosylation" value="5 sites, No reported glycans"/>
</dbReference>
<dbReference type="Proteomes" id="UP000008991">
    <property type="component" value="Segment"/>
</dbReference>
<dbReference type="Proteomes" id="UP000008992">
    <property type="component" value="Segment"/>
</dbReference>
<dbReference type="GO" id="GO:0033644">
    <property type="term" value="C:host cell membrane"/>
    <property type="evidence" value="ECO:0007669"/>
    <property type="project" value="UniProtKB-SubCell"/>
</dbReference>
<dbReference type="GO" id="GO:0016020">
    <property type="term" value="C:membrane"/>
    <property type="evidence" value="ECO:0007669"/>
    <property type="project" value="UniProtKB-KW"/>
</dbReference>
<dbReference type="InterPro" id="IPR036179">
    <property type="entry name" value="Ig-like_dom_sf"/>
</dbReference>
<dbReference type="SUPFAM" id="SSF48726">
    <property type="entry name" value="Immunoglobulin"/>
    <property type="match status" value="1"/>
</dbReference>
<organism>
    <name type="scientific">Human cytomegalovirus (strain AD169)</name>
    <name type="common">HHV-5</name>
    <name type="synonym">Human herpesvirus 5</name>
    <dbReference type="NCBI Taxonomy" id="10360"/>
    <lineage>
        <taxon>Viruses</taxon>
        <taxon>Duplodnaviria</taxon>
        <taxon>Heunggongvirae</taxon>
        <taxon>Peploviricota</taxon>
        <taxon>Herviviricetes</taxon>
        <taxon>Herpesvirales</taxon>
        <taxon>Orthoherpesviridae</taxon>
        <taxon>Betaherpesvirinae</taxon>
        <taxon>Cytomegalovirus</taxon>
        <taxon>Cytomegalovirus humanbeta5</taxon>
        <taxon>Human cytomegalovirus</taxon>
    </lineage>
</organism>
<feature type="signal peptide" evidence="1">
    <location>
        <begin position="1"/>
        <end position="19"/>
    </location>
</feature>
<feature type="chain" id="PRO_0000037448" description="Uncharacterized protein UL9">
    <location>
        <begin position="20"/>
        <end position="228"/>
    </location>
</feature>
<feature type="transmembrane region" description="Helical" evidence="1">
    <location>
        <begin position="189"/>
        <end position="209"/>
    </location>
</feature>
<feature type="glycosylation site" description="N-linked (GlcNAc...) asparagine; by host" evidence="1">
    <location>
        <position position="41"/>
    </location>
</feature>
<feature type="glycosylation site" description="N-linked (GlcNAc...) asparagine; by host" evidence="1">
    <location>
        <position position="93"/>
    </location>
</feature>
<feature type="glycosylation site" description="N-linked (GlcNAc...) asparagine; by host" evidence="1">
    <location>
        <position position="100"/>
    </location>
</feature>
<feature type="glycosylation site" description="N-linked (GlcNAc...) asparagine; by host" evidence="1">
    <location>
        <position position="128"/>
    </location>
</feature>
<feature type="glycosylation site" description="N-linked (GlcNAc...) asparagine; by host" evidence="1">
    <location>
        <position position="164"/>
    </location>
</feature>
<proteinExistence type="inferred from homology"/>
<comment type="subcellular location">
    <subcellularLocation>
        <location evidence="2">Host membrane</location>
        <topology evidence="2">Single-pass membrane protein</topology>
    </subcellularLocation>
</comment>
<comment type="similarity">
    <text evidence="2">Belongs to the HHV-5 UL9 family.</text>
</comment>
<evidence type="ECO:0000255" key="1"/>
<evidence type="ECO:0000305" key="2"/>